<proteinExistence type="inferred from homology"/>
<gene>
    <name evidence="1" type="primary">lepA</name>
    <name type="ordered locus">plu3342</name>
</gene>
<keyword id="KW-0997">Cell inner membrane</keyword>
<keyword id="KW-1003">Cell membrane</keyword>
<keyword id="KW-0342">GTP-binding</keyword>
<keyword id="KW-0378">Hydrolase</keyword>
<keyword id="KW-0472">Membrane</keyword>
<keyword id="KW-0547">Nucleotide-binding</keyword>
<keyword id="KW-0648">Protein biosynthesis</keyword>
<keyword id="KW-1185">Reference proteome</keyword>
<accession>Q7N1X3</accession>
<organism>
    <name type="scientific">Photorhabdus laumondii subsp. laumondii (strain DSM 15139 / CIP 105565 / TT01)</name>
    <name type="common">Photorhabdus luminescens subsp. laumondii</name>
    <dbReference type="NCBI Taxonomy" id="243265"/>
    <lineage>
        <taxon>Bacteria</taxon>
        <taxon>Pseudomonadati</taxon>
        <taxon>Pseudomonadota</taxon>
        <taxon>Gammaproteobacteria</taxon>
        <taxon>Enterobacterales</taxon>
        <taxon>Morganellaceae</taxon>
        <taxon>Photorhabdus</taxon>
    </lineage>
</organism>
<evidence type="ECO:0000255" key="1">
    <source>
        <dbReference type="HAMAP-Rule" id="MF_00071"/>
    </source>
</evidence>
<comment type="function">
    <text evidence="1">Required for accurate and efficient protein synthesis under certain stress conditions. May act as a fidelity factor of the translation reaction, by catalyzing a one-codon backward translocation of tRNAs on improperly translocated ribosomes. Back-translocation proceeds from a post-translocation (POST) complex to a pre-translocation (PRE) complex, thus giving elongation factor G a second chance to translocate the tRNAs correctly. Binds to ribosomes in a GTP-dependent manner.</text>
</comment>
<comment type="catalytic activity">
    <reaction evidence="1">
        <text>GTP + H2O = GDP + phosphate + H(+)</text>
        <dbReference type="Rhea" id="RHEA:19669"/>
        <dbReference type="ChEBI" id="CHEBI:15377"/>
        <dbReference type="ChEBI" id="CHEBI:15378"/>
        <dbReference type="ChEBI" id="CHEBI:37565"/>
        <dbReference type="ChEBI" id="CHEBI:43474"/>
        <dbReference type="ChEBI" id="CHEBI:58189"/>
        <dbReference type="EC" id="3.6.5.n1"/>
    </reaction>
</comment>
<comment type="subcellular location">
    <subcellularLocation>
        <location evidence="1">Cell inner membrane</location>
        <topology evidence="1">Peripheral membrane protein</topology>
        <orientation evidence="1">Cytoplasmic side</orientation>
    </subcellularLocation>
</comment>
<comment type="similarity">
    <text evidence="1">Belongs to the TRAFAC class translation factor GTPase superfamily. Classic translation factor GTPase family. LepA subfamily.</text>
</comment>
<dbReference type="EC" id="3.6.5.n1" evidence="1"/>
<dbReference type="EMBL" id="BX571870">
    <property type="protein sequence ID" value="CAE15716.1"/>
    <property type="molecule type" value="Genomic_DNA"/>
</dbReference>
<dbReference type="RefSeq" id="WP_011147530.1">
    <property type="nucleotide sequence ID" value="NC_005126.1"/>
</dbReference>
<dbReference type="SMR" id="Q7N1X3"/>
<dbReference type="STRING" id="243265.plu3342"/>
<dbReference type="GeneID" id="48849595"/>
<dbReference type="KEGG" id="plu:plu3342"/>
<dbReference type="eggNOG" id="COG0481">
    <property type="taxonomic scope" value="Bacteria"/>
</dbReference>
<dbReference type="HOGENOM" id="CLU_009995_3_3_6"/>
<dbReference type="OrthoDB" id="9801472at2"/>
<dbReference type="Proteomes" id="UP000002514">
    <property type="component" value="Chromosome"/>
</dbReference>
<dbReference type="GO" id="GO:0005886">
    <property type="term" value="C:plasma membrane"/>
    <property type="evidence" value="ECO:0007669"/>
    <property type="project" value="UniProtKB-SubCell"/>
</dbReference>
<dbReference type="GO" id="GO:0005525">
    <property type="term" value="F:GTP binding"/>
    <property type="evidence" value="ECO:0007669"/>
    <property type="project" value="UniProtKB-UniRule"/>
</dbReference>
<dbReference type="GO" id="GO:0003924">
    <property type="term" value="F:GTPase activity"/>
    <property type="evidence" value="ECO:0007669"/>
    <property type="project" value="UniProtKB-UniRule"/>
</dbReference>
<dbReference type="GO" id="GO:0097216">
    <property type="term" value="F:guanosine tetraphosphate binding"/>
    <property type="evidence" value="ECO:0007669"/>
    <property type="project" value="UniProtKB-ARBA"/>
</dbReference>
<dbReference type="GO" id="GO:0043022">
    <property type="term" value="F:ribosome binding"/>
    <property type="evidence" value="ECO:0007669"/>
    <property type="project" value="UniProtKB-UniRule"/>
</dbReference>
<dbReference type="GO" id="GO:0003746">
    <property type="term" value="F:translation elongation factor activity"/>
    <property type="evidence" value="ECO:0007669"/>
    <property type="project" value="UniProtKB-UniRule"/>
</dbReference>
<dbReference type="GO" id="GO:0045727">
    <property type="term" value="P:positive regulation of translation"/>
    <property type="evidence" value="ECO:0007669"/>
    <property type="project" value="UniProtKB-UniRule"/>
</dbReference>
<dbReference type="CDD" id="cd03699">
    <property type="entry name" value="EF4_II"/>
    <property type="match status" value="1"/>
</dbReference>
<dbReference type="CDD" id="cd16260">
    <property type="entry name" value="EF4_III"/>
    <property type="match status" value="1"/>
</dbReference>
<dbReference type="CDD" id="cd01890">
    <property type="entry name" value="LepA"/>
    <property type="match status" value="1"/>
</dbReference>
<dbReference type="CDD" id="cd03709">
    <property type="entry name" value="lepA_C"/>
    <property type="match status" value="1"/>
</dbReference>
<dbReference type="FunFam" id="3.30.70.240:FF:000005">
    <property type="entry name" value="Elongation factor 4"/>
    <property type="match status" value="1"/>
</dbReference>
<dbReference type="FunFam" id="3.40.50.300:FF:000078">
    <property type="entry name" value="Elongation factor 4"/>
    <property type="match status" value="1"/>
</dbReference>
<dbReference type="FunFam" id="2.40.30.10:FF:000015">
    <property type="entry name" value="Translation factor GUF1, mitochondrial"/>
    <property type="match status" value="1"/>
</dbReference>
<dbReference type="FunFam" id="3.30.70.2570:FF:000001">
    <property type="entry name" value="Translation factor GUF1, mitochondrial"/>
    <property type="match status" value="1"/>
</dbReference>
<dbReference type="FunFam" id="3.30.70.870:FF:000004">
    <property type="entry name" value="Translation factor GUF1, mitochondrial"/>
    <property type="match status" value="1"/>
</dbReference>
<dbReference type="Gene3D" id="3.30.70.240">
    <property type="match status" value="1"/>
</dbReference>
<dbReference type="Gene3D" id="3.30.70.2570">
    <property type="entry name" value="Elongation factor 4, C-terminal domain"/>
    <property type="match status" value="1"/>
</dbReference>
<dbReference type="Gene3D" id="3.30.70.870">
    <property type="entry name" value="Elongation Factor G (Translational Gtpase), domain 3"/>
    <property type="match status" value="1"/>
</dbReference>
<dbReference type="Gene3D" id="3.40.50.300">
    <property type="entry name" value="P-loop containing nucleotide triphosphate hydrolases"/>
    <property type="match status" value="1"/>
</dbReference>
<dbReference type="Gene3D" id="2.40.30.10">
    <property type="entry name" value="Translation factors"/>
    <property type="match status" value="1"/>
</dbReference>
<dbReference type="HAMAP" id="MF_00071">
    <property type="entry name" value="LepA"/>
    <property type="match status" value="1"/>
</dbReference>
<dbReference type="InterPro" id="IPR006297">
    <property type="entry name" value="EF-4"/>
</dbReference>
<dbReference type="InterPro" id="IPR035647">
    <property type="entry name" value="EFG_III/V"/>
</dbReference>
<dbReference type="InterPro" id="IPR000640">
    <property type="entry name" value="EFG_V-like"/>
</dbReference>
<dbReference type="InterPro" id="IPR004161">
    <property type="entry name" value="EFTu-like_2"/>
</dbReference>
<dbReference type="InterPro" id="IPR031157">
    <property type="entry name" value="G_TR_CS"/>
</dbReference>
<dbReference type="InterPro" id="IPR038363">
    <property type="entry name" value="LepA_C_sf"/>
</dbReference>
<dbReference type="InterPro" id="IPR013842">
    <property type="entry name" value="LepA_CTD"/>
</dbReference>
<dbReference type="InterPro" id="IPR035654">
    <property type="entry name" value="LepA_IV"/>
</dbReference>
<dbReference type="InterPro" id="IPR027417">
    <property type="entry name" value="P-loop_NTPase"/>
</dbReference>
<dbReference type="InterPro" id="IPR005225">
    <property type="entry name" value="Small_GTP-bd"/>
</dbReference>
<dbReference type="InterPro" id="IPR000795">
    <property type="entry name" value="T_Tr_GTP-bd_dom"/>
</dbReference>
<dbReference type="NCBIfam" id="TIGR01393">
    <property type="entry name" value="lepA"/>
    <property type="match status" value="1"/>
</dbReference>
<dbReference type="NCBIfam" id="TIGR00231">
    <property type="entry name" value="small_GTP"/>
    <property type="match status" value="1"/>
</dbReference>
<dbReference type="PANTHER" id="PTHR43512:SF4">
    <property type="entry name" value="TRANSLATION FACTOR GUF1 HOMOLOG, CHLOROPLASTIC"/>
    <property type="match status" value="1"/>
</dbReference>
<dbReference type="PANTHER" id="PTHR43512">
    <property type="entry name" value="TRANSLATION FACTOR GUF1-RELATED"/>
    <property type="match status" value="1"/>
</dbReference>
<dbReference type="Pfam" id="PF00679">
    <property type="entry name" value="EFG_C"/>
    <property type="match status" value="1"/>
</dbReference>
<dbReference type="Pfam" id="PF00009">
    <property type="entry name" value="GTP_EFTU"/>
    <property type="match status" value="1"/>
</dbReference>
<dbReference type="Pfam" id="PF03144">
    <property type="entry name" value="GTP_EFTU_D2"/>
    <property type="match status" value="1"/>
</dbReference>
<dbReference type="Pfam" id="PF06421">
    <property type="entry name" value="LepA_C"/>
    <property type="match status" value="1"/>
</dbReference>
<dbReference type="PRINTS" id="PR00315">
    <property type="entry name" value="ELONGATNFCT"/>
</dbReference>
<dbReference type="SUPFAM" id="SSF54980">
    <property type="entry name" value="EF-G C-terminal domain-like"/>
    <property type="match status" value="2"/>
</dbReference>
<dbReference type="SUPFAM" id="SSF52540">
    <property type="entry name" value="P-loop containing nucleoside triphosphate hydrolases"/>
    <property type="match status" value="1"/>
</dbReference>
<dbReference type="PROSITE" id="PS00301">
    <property type="entry name" value="G_TR_1"/>
    <property type="match status" value="1"/>
</dbReference>
<dbReference type="PROSITE" id="PS51722">
    <property type="entry name" value="G_TR_2"/>
    <property type="match status" value="1"/>
</dbReference>
<name>LEPA_PHOLL</name>
<protein>
    <recommendedName>
        <fullName evidence="1">Elongation factor 4</fullName>
        <shortName evidence="1">EF-4</shortName>
        <ecNumber evidence="1">3.6.5.n1</ecNumber>
    </recommendedName>
    <alternativeName>
        <fullName evidence="1">Ribosomal back-translocase LepA</fullName>
    </alternativeName>
</protein>
<sequence>MKQIRNFSIIAHIDHGKSTLSDRIIQICGGLTDREMAEQVLDSMDLERERGITIKAQSVTLDYKANDGQLYQLNFIDTPGHVDFSYEVSRSLAACEGALLVVDAGQGVEAQTLANCYTALDMNLEVVPVLNKIDLPAAEPERVAEEIEDIVGIDATDAVRCSAKTGVGVQDVIERLVKEIPAPEGNSDEPLQALIIDSWFDNYLGVVSLVRIKNGTLRKGDKIKVMSTGQVYNADRLGIFTPKRVDRDVLGCGEVGWLVCAIKDILGAPVGDTLTLARQPAEKPLPGFKKVKPQVYAGLFPVSSDDYEAFRDALGKLSLNDASLFYEPESSSALGFGFRCGFLGLLHMEIIQERLEREYDLDLITTAPTVVYEVETTSHDTLYVDSPSKLPPLNNIEELREPIAECHMLLPQEYLGNVITLCVEKRGVQTNMVYHGKQVALTYEIPMAEVVLDFFDRLKSTSRGYASLDYNFTRFQSSDMVRVDVLINAERVDALALITHRGNAQYRGRELVEKMKELIPRQQFDIAIQAAIGNHIIARSTVKQLRKNVLAKCYGGDVSRKKKLLQKQKEGKKRMKQVGNVELPQEAFLAILHVGKDN</sequence>
<reference key="1">
    <citation type="journal article" date="2003" name="Nat. Biotechnol.">
        <title>The genome sequence of the entomopathogenic bacterium Photorhabdus luminescens.</title>
        <authorList>
            <person name="Duchaud E."/>
            <person name="Rusniok C."/>
            <person name="Frangeul L."/>
            <person name="Buchrieser C."/>
            <person name="Givaudan A."/>
            <person name="Taourit S."/>
            <person name="Bocs S."/>
            <person name="Boursaux-Eude C."/>
            <person name="Chandler M."/>
            <person name="Charles J.-F."/>
            <person name="Dassa E."/>
            <person name="Derose R."/>
            <person name="Derzelle S."/>
            <person name="Freyssinet G."/>
            <person name="Gaudriault S."/>
            <person name="Medigue C."/>
            <person name="Lanois A."/>
            <person name="Powell K."/>
            <person name="Siguier P."/>
            <person name="Vincent R."/>
            <person name="Wingate V."/>
            <person name="Zouine M."/>
            <person name="Glaser P."/>
            <person name="Boemare N."/>
            <person name="Danchin A."/>
            <person name="Kunst F."/>
        </authorList>
    </citation>
    <scope>NUCLEOTIDE SEQUENCE [LARGE SCALE GENOMIC DNA]</scope>
    <source>
        <strain>DSM 15139 / CIP 105565 / TT01</strain>
    </source>
</reference>
<feature type="chain" id="PRO_0000176316" description="Elongation factor 4">
    <location>
        <begin position="1"/>
        <end position="598"/>
    </location>
</feature>
<feature type="domain" description="tr-type G">
    <location>
        <begin position="2"/>
        <end position="184"/>
    </location>
</feature>
<feature type="binding site" evidence="1">
    <location>
        <begin position="14"/>
        <end position="19"/>
    </location>
    <ligand>
        <name>GTP</name>
        <dbReference type="ChEBI" id="CHEBI:37565"/>
    </ligand>
</feature>
<feature type="binding site" evidence="1">
    <location>
        <begin position="131"/>
        <end position="134"/>
    </location>
    <ligand>
        <name>GTP</name>
        <dbReference type="ChEBI" id="CHEBI:37565"/>
    </ligand>
</feature>